<organism>
    <name type="scientific">Conus tessulatus</name>
    <name type="common">Tessellate cone</name>
    <dbReference type="NCBI Taxonomy" id="101317"/>
    <lineage>
        <taxon>Eukaryota</taxon>
        <taxon>Metazoa</taxon>
        <taxon>Spiralia</taxon>
        <taxon>Lophotrochozoa</taxon>
        <taxon>Mollusca</taxon>
        <taxon>Gastropoda</taxon>
        <taxon>Caenogastropoda</taxon>
        <taxon>Neogastropoda</taxon>
        <taxon>Conoidea</taxon>
        <taxon>Conidae</taxon>
        <taxon>Conus</taxon>
        <taxon>Tesselliconus</taxon>
    </lineage>
</organism>
<feature type="signal peptide" evidence="3">
    <location>
        <begin position="1"/>
        <end position="20"/>
    </location>
</feature>
<feature type="propeptide" id="PRO_0000404912" evidence="1">
    <location>
        <begin position="21"/>
        <end position="50"/>
    </location>
</feature>
<feature type="peptide" id="PRO_0000404913" description="Conotoxin TsMMSK-011">
    <location>
        <begin position="53"/>
        <end position="67"/>
    </location>
</feature>
<feature type="modified residue" description="4-hydroxyproline" evidence="1">
    <location>
        <position position="63"/>
    </location>
</feature>
<feature type="disulfide bond" evidence="2">
    <location>
        <begin position="53"/>
        <end position="65"/>
    </location>
</feature>
<feature type="disulfide bond" evidence="2">
    <location>
        <begin position="54"/>
        <end position="61"/>
    </location>
</feature>
<feature type="disulfide bond" evidence="2">
    <location>
        <begin position="58"/>
        <end position="64"/>
    </location>
</feature>
<proteinExistence type="evidence at transcript level"/>
<evidence type="ECO:0000250" key="1"/>
<evidence type="ECO:0000250" key="2">
    <source>
        <dbReference type="UniProtKB" id="P0CI24"/>
    </source>
</evidence>
<evidence type="ECO:0000255" key="3"/>
<evidence type="ECO:0000305" key="4"/>
<dbReference type="EMBL" id="AF214941">
    <property type="protein sequence ID" value="AAG60369.1"/>
    <property type="molecule type" value="mRNA"/>
</dbReference>
<dbReference type="ConoServer" id="628">
    <property type="toxin name" value="Ts3.3 precursor"/>
</dbReference>
<dbReference type="GO" id="GO:0005576">
    <property type="term" value="C:extracellular region"/>
    <property type="evidence" value="ECO:0007669"/>
    <property type="project" value="UniProtKB-SubCell"/>
</dbReference>
<dbReference type="GO" id="GO:0008200">
    <property type="term" value="F:ion channel inhibitor activity"/>
    <property type="evidence" value="ECO:0007669"/>
    <property type="project" value="InterPro"/>
</dbReference>
<dbReference type="GO" id="GO:0090729">
    <property type="term" value="F:toxin activity"/>
    <property type="evidence" value="ECO:0007669"/>
    <property type="project" value="UniProtKB-KW"/>
</dbReference>
<dbReference type="InterPro" id="IPR017896">
    <property type="entry name" value="4Fe4S_Fe-S-bd"/>
</dbReference>
<dbReference type="InterPro" id="IPR004214">
    <property type="entry name" value="Conotoxin"/>
</dbReference>
<dbReference type="Pfam" id="PF02950">
    <property type="entry name" value="Conotoxin"/>
    <property type="match status" value="1"/>
</dbReference>
<accession>Q9BPI3</accession>
<protein>
    <recommendedName>
        <fullName>Conotoxin TsMMSK-011</fullName>
    </recommendedName>
</protein>
<reference key="1">
    <citation type="journal article" date="2001" name="Mol. Biol. Evol.">
        <title>Mechanisms for evolving hypervariability: the case of conopeptides.</title>
        <authorList>
            <person name="Conticello S.G."/>
            <person name="Gilad Y."/>
            <person name="Avidan N."/>
            <person name="Ben-Asher E."/>
            <person name="Levy Z."/>
            <person name="Fainzilber M."/>
        </authorList>
    </citation>
    <scope>NUCLEOTIDE SEQUENCE [MRNA]</scope>
    <source>
        <tissue>Venom duct</tissue>
    </source>
</reference>
<name>M23B_CONTS</name>
<sequence length="67" mass="7486">MMSKLGVLLTICLLLFPLTAVQLDGDQPADLPALRTQDIATDHSPWFDPVKRCCSRYCYICIPCCPN</sequence>
<keyword id="KW-0165">Cleavage on pair of basic residues</keyword>
<keyword id="KW-1015">Disulfide bond</keyword>
<keyword id="KW-0379">Hydroxylation</keyword>
<keyword id="KW-0528">Neurotoxin</keyword>
<keyword id="KW-0964">Secreted</keyword>
<keyword id="KW-0732">Signal</keyword>
<keyword id="KW-0800">Toxin</keyword>
<comment type="subcellular location">
    <subcellularLocation>
        <location evidence="1">Secreted</location>
    </subcellularLocation>
</comment>
<comment type="tissue specificity">
    <text>Expressed by the venom duct.</text>
</comment>
<comment type="domain">
    <text>The cysteine framework is III (CC-C-C-CC). Classified in the M-2 branch, since 2 residues stand between the fourth and the fifth cysteine residues.</text>
</comment>
<comment type="similarity">
    <text evidence="4">Belongs to the conotoxin M superfamily.</text>
</comment>